<reference key="1">
    <citation type="journal article" date="2002" name="Nat. Genet.">
        <title>Genome sequence of the endocellular obligate symbiont of tsetse flies, Wigglesworthia glossinidia.</title>
        <authorList>
            <person name="Akman L."/>
            <person name="Yamashita A."/>
            <person name="Watanabe H."/>
            <person name="Oshima K."/>
            <person name="Shiba T."/>
            <person name="Hattori M."/>
            <person name="Aksoy S."/>
        </authorList>
    </citation>
    <scope>NUCLEOTIDE SEQUENCE [LARGE SCALE GENOMIC DNA]</scope>
</reference>
<evidence type="ECO:0000255" key="1">
    <source>
        <dbReference type="HAMAP-Rule" id="MF_00104"/>
    </source>
</evidence>
<proteinExistence type="inferred from homology"/>
<name>RNC_WIGBR</name>
<comment type="function">
    <text evidence="1">Digests double-stranded RNA. Involved in the processing of primary rRNA transcript to yield the immediate precursors to the large and small rRNAs (23S and 16S). Processes some mRNAs, and tRNAs when they are encoded in the rRNA operon. Processes pre-crRNA and tracrRNA of type II CRISPR loci if present in the organism.</text>
</comment>
<comment type="catalytic activity">
    <reaction evidence="1">
        <text>Endonucleolytic cleavage to 5'-phosphomonoester.</text>
        <dbReference type="EC" id="3.1.26.3"/>
    </reaction>
</comment>
<comment type="cofactor">
    <cofactor evidence="1">
        <name>Mg(2+)</name>
        <dbReference type="ChEBI" id="CHEBI:18420"/>
    </cofactor>
</comment>
<comment type="subunit">
    <text evidence="1">Homodimer.</text>
</comment>
<comment type="subcellular location">
    <subcellularLocation>
        <location evidence="1">Cytoplasm</location>
    </subcellularLocation>
</comment>
<comment type="similarity">
    <text evidence="1">Belongs to the ribonuclease III family.</text>
</comment>
<accession>Q8D305</accession>
<organism>
    <name type="scientific">Wigglesworthia glossinidia brevipalpis</name>
    <dbReference type="NCBI Taxonomy" id="36870"/>
    <lineage>
        <taxon>Bacteria</taxon>
        <taxon>Pseudomonadati</taxon>
        <taxon>Pseudomonadota</taxon>
        <taxon>Gammaproteobacteria</taxon>
        <taxon>Enterobacterales</taxon>
        <taxon>Erwiniaceae</taxon>
        <taxon>Wigglesworthia</taxon>
    </lineage>
</organism>
<gene>
    <name evidence="1" type="primary">rnc</name>
    <name type="ordered locus">WIGBR1960</name>
</gene>
<keyword id="KW-0963">Cytoplasm</keyword>
<keyword id="KW-0255">Endonuclease</keyword>
<keyword id="KW-0378">Hydrolase</keyword>
<keyword id="KW-0460">Magnesium</keyword>
<keyword id="KW-0479">Metal-binding</keyword>
<keyword id="KW-0507">mRNA processing</keyword>
<keyword id="KW-0540">Nuclease</keyword>
<keyword id="KW-1185">Reference proteome</keyword>
<keyword id="KW-0694">RNA-binding</keyword>
<keyword id="KW-0698">rRNA processing</keyword>
<keyword id="KW-0699">rRNA-binding</keyword>
<keyword id="KW-0819">tRNA processing</keyword>
<protein>
    <recommendedName>
        <fullName evidence="1">Ribonuclease 3</fullName>
        <ecNumber evidence="1">3.1.26.3</ecNumber>
    </recommendedName>
    <alternativeName>
        <fullName evidence="1">Ribonuclease III</fullName>
        <shortName evidence="1">RNase III</shortName>
    </alternativeName>
</protein>
<sequence length="226" mass="25983">MKNLFFNKLQKKMGYLFHNNIILKQALTHRSFSSKNNERLEFLGDSILNYIISDALYNNFTNIPEGKLSQMRSYLVRGNTLAEIAREFCLGDYLILGIGEVKTGGKNRDSILSNAMEAIIGGIFLDSNINKTHEIVISWYKNRLYSMSLKNLKKDPKTRLQEYLQGNKFSLPQYYIKNITGESHNQEFTICCFIDDLKKSVIGYGKTRRKAEQSAAKQALLLFNIL</sequence>
<feature type="chain" id="PRO_0000180456" description="Ribonuclease 3">
    <location>
        <begin position="1"/>
        <end position="226"/>
    </location>
</feature>
<feature type="domain" description="RNase III" evidence="1">
    <location>
        <begin position="6"/>
        <end position="128"/>
    </location>
</feature>
<feature type="domain" description="DRBM" evidence="1">
    <location>
        <begin position="155"/>
        <end position="225"/>
    </location>
</feature>
<feature type="active site" evidence="1">
    <location>
        <position position="45"/>
    </location>
</feature>
<feature type="active site" evidence="1">
    <location>
        <position position="117"/>
    </location>
</feature>
<feature type="binding site" evidence="1">
    <location>
        <position position="41"/>
    </location>
    <ligand>
        <name>Mg(2+)</name>
        <dbReference type="ChEBI" id="CHEBI:18420"/>
    </ligand>
</feature>
<feature type="binding site" evidence="1">
    <location>
        <position position="114"/>
    </location>
    <ligand>
        <name>Mg(2+)</name>
        <dbReference type="ChEBI" id="CHEBI:18420"/>
    </ligand>
</feature>
<feature type="binding site" evidence="1">
    <location>
        <position position="117"/>
    </location>
    <ligand>
        <name>Mg(2+)</name>
        <dbReference type="ChEBI" id="CHEBI:18420"/>
    </ligand>
</feature>
<dbReference type="EC" id="3.1.26.3" evidence="1"/>
<dbReference type="EMBL" id="BA000021">
    <property type="protein sequence ID" value="BAC24342.1"/>
    <property type="molecule type" value="Genomic_DNA"/>
</dbReference>
<dbReference type="SMR" id="Q8D305"/>
<dbReference type="STRING" id="36870.gene:10368684"/>
<dbReference type="KEGG" id="wbr:rnc"/>
<dbReference type="eggNOG" id="COG0571">
    <property type="taxonomic scope" value="Bacteria"/>
</dbReference>
<dbReference type="HOGENOM" id="CLU_000907_1_1_6"/>
<dbReference type="OrthoDB" id="9805026at2"/>
<dbReference type="Proteomes" id="UP000000562">
    <property type="component" value="Chromosome"/>
</dbReference>
<dbReference type="GO" id="GO:0005737">
    <property type="term" value="C:cytoplasm"/>
    <property type="evidence" value="ECO:0007669"/>
    <property type="project" value="UniProtKB-SubCell"/>
</dbReference>
<dbReference type="GO" id="GO:0003725">
    <property type="term" value="F:double-stranded RNA binding"/>
    <property type="evidence" value="ECO:0007669"/>
    <property type="project" value="TreeGrafter"/>
</dbReference>
<dbReference type="GO" id="GO:0046872">
    <property type="term" value="F:metal ion binding"/>
    <property type="evidence" value="ECO:0007669"/>
    <property type="project" value="UniProtKB-KW"/>
</dbReference>
<dbReference type="GO" id="GO:0004525">
    <property type="term" value="F:ribonuclease III activity"/>
    <property type="evidence" value="ECO:0007669"/>
    <property type="project" value="UniProtKB-UniRule"/>
</dbReference>
<dbReference type="GO" id="GO:0019843">
    <property type="term" value="F:rRNA binding"/>
    <property type="evidence" value="ECO:0007669"/>
    <property type="project" value="UniProtKB-KW"/>
</dbReference>
<dbReference type="GO" id="GO:0006397">
    <property type="term" value="P:mRNA processing"/>
    <property type="evidence" value="ECO:0007669"/>
    <property type="project" value="UniProtKB-UniRule"/>
</dbReference>
<dbReference type="GO" id="GO:0010468">
    <property type="term" value="P:regulation of gene expression"/>
    <property type="evidence" value="ECO:0007669"/>
    <property type="project" value="TreeGrafter"/>
</dbReference>
<dbReference type="GO" id="GO:0006364">
    <property type="term" value="P:rRNA processing"/>
    <property type="evidence" value="ECO:0007669"/>
    <property type="project" value="UniProtKB-UniRule"/>
</dbReference>
<dbReference type="GO" id="GO:0008033">
    <property type="term" value="P:tRNA processing"/>
    <property type="evidence" value="ECO:0007669"/>
    <property type="project" value="UniProtKB-KW"/>
</dbReference>
<dbReference type="CDD" id="cd10845">
    <property type="entry name" value="DSRM_RNAse_III_family"/>
    <property type="match status" value="1"/>
</dbReference>
<dbReference type="CDD" id="cd00593">
    <property type="entry name" value="RIBOc"/>
    <property type="match status" value="1"/>
</dbReference>
<dbReference type="FunFam" id="1.10.1520.10:FF:000001">
    <property type="entry name" value="Ribonuclease 3"/>
    <property type="match status" value="1"/>
</dbReference>
<dbReference type="FunFam" id="3.30.160.20:FF:000003">
    <property type="entry name" value="Ribonuclease 3"/>
    <property type="match status" value="1"/>
</dbReference>
<dbReference type="Gene3D" id="3.30.160.20">
    <property type="match status" value="1"/>
</dbReference>
<dbReference type="Gene3D" id="1.10.1520.10">
    <property type="entry name" value="Ribonuclease III domain"/>
    <property type="match status" value="1"/>
</dbReference>
<dbReference type="HAMAP" id="MF_00104">
    <property type="entry name" value="RNase_III"/>
    <property type="match status" value="1"/>
</dbReference>
<dbReference type="InterPro" id="IPR014720">
    <property type="entry name" value="dsRBD_dom"/>
</dbReference>
<dbReference type="InterPro" id="IPR011907">
    <property type="entry name" value="RNase_III"/>
</dbReference>
<dbReference type="InterPro" id="IPR000999">
    <property type="entry name" value="RNase_III_dom"/>
</dbReference>
<dbReference type="InterPro" id="IPR036389">
    <property type="entry name" value="RNase_III_sf"/>
</dbReference>
<dbReference type="NCBIfam" id="TIGR02191">
    <property type="entry name" value="RNaseIII"/>
    <property type="match status" value="1"/>
</dbReference>
<dbReference type="PANTHER" id="PTHR11207:SF0">
    <property type="entry name" value="RIBONUCLEASE 3"/>
    <property type="match status" value="1"/>
</dbReference>
<dbReference type="PANTHER" id="PTHR11207">
    <property type="entry name" value="RIBONUCLEASE III"/>
    <property type="match status" value="1"/>
</dbReference>
<dbReference type="Pfam" id="PF00035">
    <property type="entry name" value="dsrm"/>
    <property type="match status" value="1"/>
</dbReference>
<dbReference type="Pfam" id="PF14622">
    <property type="entry name" value="Ribonucleas_3_3"/>
    <property type="match status" value="1"/>
</dbReference>
<dbReference type="SMART" id="SM00358">
    <property type="entry name" value="DSRM"/>
    <property type="match status" value="1"/>
</dbReference>
<dbReference type="SMART" id="SM00535">
    <property type="entry name" value="RIBOc"/>
    <property type="match status" value="1"/>
</dbReference>
<dbReference type="SUPFAM" id="SSF54768">
    <property type="entry name" value="dsRNA-binding domain-like"/>
    <property type="match status" value="1"/>
</dbReference>
<dbReference type="SUPFAM" id="SSF69065">
    <property type="entry name" value="RNase III domain-like"/>
    <property type="match status" value="1"/>
</dbReference>
<dbReference type="PROSITE" id="PS50137">
    <property type="entry name" value="DS_RBD"/>
    <property type="match status" value="1"/>
</dbReference>
<dbReference type="PROSITE" id="PS00517">
    <property type="entry name" value="RNASE_3_1"/>
    <property type="match status" value="1"/>
</dbReference>
<dbReference type="PROSITE" id="PS50142">
    <property type="entry name" value="RNASE_3_2"/>
    <property type="match status" value="1"/>
</dbReference>